<sequence length="448" mass="51427">MRAVVVVTGLVVVVVATALSLPNHDVKSATSSRSSSDYQGSSGDDCDEGLPPPDQPFRVVWNHPDNCERIKLHLPLDDYGIIFNKLRVFLGEEIQTLYDTGPWPYISETGKFINGGLPQSFNHPDNDGETQRILKKHRPENFTGLGVLDFETWRAIYSTNFGPMTIYQNESVKLVKEQHPDYDQKKLTKVAEKEWQQAAKDIMSNKLKIAQEVMPRGHWGYYLYPRTWDNKRDTKFRNDKINWLWRQSTGLYPSIYIYDFSKTESAITKFVSDTVGEAVRVQKEFSPPNTPIYPYVMFQTMDNIFHYEDHLKISLGLSAKMGAAGVVLWGTSKHYKESTRQWQCQQLQEHIRTVLGPLVKNVTQMMTDCSRAICEGHGRCVHNSHDVILGETESQRLSDLCSTRQSRFRDYHCRCYSAWEGACCQTLRPSRCQKREQRNVHGGGDLID</sequence>
<proteinExistence type="evidence at protein level"/>
<name>HYAL_CONCN</name>
<accession>I0CME7</accession>
<reference key="1">
    <citation type="journal article" date="2012" name="Mar. Drugs">
        <title>Recruitment of glycosyl hydrolase proteins in a cone snail venomous arsenal: further insights into biomolecular features of Conus venoms.</title>
        <authorList>
            <person name="Violette A."/>
            <person name="Leonardi A."/>
            <person name="Piquemal D."/>
            <person name="Terrat Y."/>
            <person name="Biass D."/>
            <person name="Dutertre S."/>
            <person name="Noguier F."/>
            <person name="Ducancel F."/>
            <person name="Stocklin R."/>
            <person name="Krizaj I."/>
            <person name="Favreau P."/>
        </authorList>
    </citation>
    <scope>NUCLEOTIDE SEQUENCE [MRNA]</scope>
    <scope>PROTEIN SEQUENCE OF 34-43 AND 137-154</scope>
    <scope>CATALYTIC ACTIVITY</scope>
    <scope>IDENTIFICATION BY MASS SPECTROMETRY</scope>
    <scope>VARIANT GLU-78</scope>
    <scope>GLYCOSYLATION AT ASN-141 AND ASN-361</scope>
    <source>
        <tissue>Venom</tissue>
        <tissue>Venom duct</tissue>
    </source>
</reference>
<comment type="function">
    <text>Hyaluronidase catalyzes the hydrolysis of hyaluronic acid (HA), an anionic, nonsulfated glycosaminoglycan distributed widely throughout connective, epithelial, and neural tissues. In venom, they are known to enhance diffusion of the venom by degrading the extracellular matrix.</text>
</comment>
<comment type="catalytic activity">
    <reaction evidence="4">
        <text>Random hydrolysis of (1-&gt;4)-linkages between N-acetyl-beta-D-glucosamine and D-glucuronate residues in hyaluronate.</text>
        <dbReference type="EC" id="3.2.1.35"/>
    </reaction>
</comment>
<comment type="subcellular location">
    <subcellularLocation>
        <location>Secreted</location>
    </subcellularLocation>
</comment>
<comment type="tissue specificity">
    <text>Expressed by the venom duct.</text>
</comment>
<comment type="miscellaneous">
    <text evidence="6">Found in both injectable (milked) (IV) and dissected venom (DV).</text>
</comment>
<comment type="similarity">
    <text evidence="5">Belongs to the glycosyl hydrolase 56 family.</text>
</comment>
<organism>
    <name type="scientific">Conus consors</name>
    <name type="common">Singed cone</name>
    <dbReference type="NCBI Taxonomy" id="101297"/>
    <lineage>
        <taxon>Eukaryota</taxon>
        <taxon>Metazoa</taxon>
        <taxon>Spiralia</taxon>
        <taxon>Lophotrochozoa</taxon>
        <taxon>Mollusca</taxon>
        <taxon>Gastropoda</taxon>
        <taxon>Caenogastropoda</taxon>
        <taxon>Neogastropoda</taxon>
        <taxon>Conoidea</taxon>
        <taxon>Conidae</taxon>
        <taxon>Conus</taxon>
        <taxon>Pionoconus</taxon>
    </lineage>
</organism>
<evidence type="ECO:0000250" key="1"/>
<evidence type="ECO:0000255" key="2"/>
<evidence type="ECO:0000256" key="3">
    <source>
        <dbReference type="SAM" id="MobiDB-lite"/>
    </source>
</evidence>
<evidence type="ECO:0000269" key="4">
    <source>
    </source>
</evidence>
<evidence type="ECO:0000305" key="5"/>
<evidence type="ECO:0000305" key="6">
    <source>
    </source>
</evidence>
<keyword id="KW-0903">Direct protein sequencing</keyword>
<keyword id="KW-1015">Disulfide bond</keyword>
<keyword id="KW-0245">EGF-like domain</keyword>
<keyword id="KW-0325">Glycoprotein</keyword>
<keyword id="KW-0326">Glycosidase</keyword>
<keyword id="KW-0378">Hydrolase</keyword>
<keyword id="KW-0964">Secreted</keyword>
<keyword id="KW-0732">Signal</keyword>
<protein>
    <recommendedName>
        <fullName>Hyaluronidase conohyal-Cn1</fullName>
        <shortName>Hya</shortName>
        <ecNumber>3.2.1.35</ecNumber>
    </recommendedName>
    <alternativeName>
        <fullName>Hyaluronoglucosaminidase</fullName>
    </alternativeName>
</protein>
<dbReference type="EC" id="3.2.1.35"/>
<dbReference type="EMBL" id="JN697596">
    <property type="protein sequence ID" value="AFH78528.1"/>
    <property type="molecule type" value="mRNA"/>
</dbReference>
<dbReference type="SMR" id="I0CME7"/>
<dbReference type="CAZy" id="GH56">
    <property type="family name" value="Glycoside Hydrolase Family 56"/>
</dbReference>
<dbReference type="iPTMnet" id="I0CME7"/>
<dbReference type="GO" id="GO:0005576">
    <property type="term" value="C:extracellular region"/>
    <property type="evidence" value="ECO:0007669"/>
    <property type="project" value="UniProtKB-SubCell"/>
</dbReference>
<dbReference type="GO" id="GO:0004415">
    <property type="term" value="F:hyalurononglucosaminidase activity"/>
    <property type="evidence" value="ECO:0007669"/>
    <property type="project" value="UniProtKB-EC"/>
</dbReference>
<dbReference type="GO" id="GO:0005975">
    <property type="term" value="P:carbohydrate metabolic process"/>
    <property type="evidence" value="ECO:0007669"/>
    <property type="project" value="InterPro"/>
</dbReference>
<dbReference type="GO" id="GO:0030214">
    <property type="term" value="P:hyaluronan catabolic process"/>
    <property type="evidence" value="ECO:0007669"/>
    <property type="project" value="TreeGrafter"/>
</dbReference>
<dbReference type="Gene3D" id="3.20.20.70">
    <property type="entry name" value="Aldolase class I"/>
    <property type="match status" value="1"/>
</dbReference>
<dbReference type="InterPro" id="IPR013785">
    <property type="entry name" value="Aldolase_TIM"/>
</dbReference>
<dbReference type="InterPro" id="IPR017853">
    <property type="entry name" value="Glycoside_hydrolase_SF"/>
</dbReference>
<dbReference type="InterPro" id="IPR018155">
    <property type="entry name" value="Hyaluronidase"/>
</dbReference>
<dbReference type="PANTHER" id="PTHR11769">
    <property type="entry name" value="HYALURONIDASE"/>
    <property type="match status" value="1"/>
</dbReference>
<dbReference type="PANTHER" id="PTHR11769:SF35">
    <property type="entry name" value="HYALURONIDASE"/>
    <property type="match status" value="1"/>
</dbReference>
<dbReference type="Pfam" id="PF01630">
    <property type="entry name" value="Glyco_hydro_56"/>
    <property type="match status" value="1"/>
</dbReference>
<dbReference type="PRINTS" id="PR00846">
    <property type="entry name" value="GLHYDRLASE56"/>
</dbReference>
<dbReference type="SUPFAM" id="SSF51445">
    <property type="entry name" value="(Trans)glycosidases"/>
    <property type="match status" value="1"/>
</dbReference>
<dbReference type="PROSITE" id="PS00022">
    <property type="entry name" value="EGF_1"/>
    <property type="match status" value="1"/>
</dbReference>
<feature type="signal peptide" evidence="2">
    <location>
        <begin position="1"/>
        <end position="18"/>
    </location>
</feature>
<feature type="propeptide" id="PRO_0000419902" evidence="4">
    <location>
        <begin position="19"/>
        <end position="33"/>
    </location>
</feature>
<feature type="chain" id="PRO_0000419903" description="Hyaluronidase conohyal-Cn1">
    <location>
        <begin position="34"/>
        <end position="448"/>
    </location>
</feature>
<feature type="domain" description="EGF-like">
    <location>
        <begin position="413"/>
        <end position="424"/>
    </location>
</feature>
<feature type="region of interest" description="Disordered" evidence="3">
    <location>
        <begin position="26"/>
        <end position="55"/>
    </location>
</feature>
<feature type="compositionally biased region" description="Low complexity" evidence="3">
    <location>
        <begin position="31"/>
        <end position="43"/>
    </location>
</feature>
<feature type="active site" description="Proton donor" evidence="1">
    <location>
        <position position="151"/>
    </location>
</feature>
<feature type="glycosylation site" description="N-linked (GlcNAc...) asparagine" evidence="4">
    <location>
        <position position="141"/>
    </location>
</feature>
<feature type="glycosylation site" description="N-linked (GlcNAc...) asparagine" evidence="5">
    <location>
        <position position="169"/>
    </location>
</feature>
<feature type="glycosylation site" description="N-linked (GlcNAc...) asparagine" evidence="4">
    <location>
        <position position="361"/>
    </location>
</feature>
<feature type="disulfide bond" evidence="1">
    <location>
        <begin position="67"/>
        <end position="344"/>
    </location>
</feature>
<feature type="disulfide bond" evidence="1">
    <location>
        <begin position="369"/>
        <end position="380"/>
    </location>
</feature>
<feature type="disulfide bond" evidence="1">
    <location>
        <begin position="374"/>
        <end position="413"/>
    </location>
</feature>
<feature type="disulfide bond" evidence="1">
    <location>
        <begin position="415"/>
        <end position="424"/>
    </location>
</feature>
<feature type="sequence variant" evidence="4">
    <original>D</original>
    <variation>E</variation>
    <location>
        <position position="78"/>
    </location>
</feature>